<protein>
    <recommendedName>
        <fullName evidence="1">Imidazole glycerol phosphate synthase subunit HisF</fullName>
        <ecNumber evidence="1">4.3.2.10</ecNumber>
    </recommendedName>
    <alternativeName>
        <fullName evidence="1">IGP synthase cyclase subunit</fullName>
    </alternativeName>
    <alternativeName>
        <fullName evidence="1">IGP synthase subunit HisF</fullName>
    </alternativeName>
    <alternativeName>
        <fullName evidence="1">ImGP synthase subunit HisF</fullName>
        <shortName evidence="1">IGPS subunit HisF</shortName>
    </alternativeName>
</protein>
<organism>
    <name type="scientific">Cereibacter sphaeroides (strain ATCC 17025 / ATH 2.4.3)</name>
    <name type="common">Rhodobacter sphaeroides</name>
    <dbReference type="NCBI Taxonomy" id="349102"/>
    <lineage>
        <taxon>Bacteria</taxon>
        <taxon>Pseudomonadati</taxon>
        <taxon>Pseudomonadota</taxon>
        <taxon>Alphaproteobacteria</taxon>
        <taxon>Rhodobacterales</taxon>
        <taxon>Paracoccaceae</taxon>
        <taxon>Cereibacter</taxon>
    </lineage>
</organism>
<sequence length="253" mass="26359">MLKTRIIPCLDVADGRVVKGVNFVDLRDAGDPVEAARAYDAAGADELCFLDIHATHENRGTMYDLVTRTAEQCFMPLTVGGGVRTQQDVRALLLAGADKVSFNSAAVADPNVVAEAADRFGSQCIVVAIDAKTVAPGRWEIFTHGGRRATGIDAVEFAQDVAAKGAGEILLTSMDRDGTRSGFNLPLTRAISDAVRIPVIASGGVGTLDHLVEGVTEGGASAVLAASIFHFGEFTIGEAKAHMAAAGIPVRLA</sequence>
<accession>A4WUS8</accession>
<evidence type="ECO:0000255" key="1">
    <source>
        <dbReference type="HAMAP-Rule" id="MF_01013"/>
    </source>
</evidence>
<reference key="1">
    <citation type="submission" date="2007-04" db="EMBL/GenBank/DDBJ databases">
        <title>Complete sequence of chromosome of Rhodobacter sphaeroides ATCC 17025.</title>
        <authorList>
            <consortium name="US DOE Joint Genome Institute"/>
            <person name="Copeland A."/>
            <person name="Lucas S."/>
            <person name="Lapidus A."/>
            <person name="Barry K."/>
            <person name="Detter J.C."/>
            <person name="Glavina del Rio T."/>
            <person name="Hammon N."/>
            <person name="Israni S."/>
            <person name="Dalin E."/>
            <person name="Tice H."/>
            <person name="Pitluck S."/>
            <person name="Chertkov O."/>
            <person name="Brettin T."/>
            <person name="Bruce D."/>
            <person name="Han C."/>
            <person name="Schmutz J."/>
            <person name="Larimer F."/>
            <person name="Land M."/>
            <person name="Hauser L."/>
            <person name="Kyrpides N."/>
            <person name="Kim E."/>
            <person name="Richardson P."/>
            <person name="Mackenzie C."/>
            <person name="Choudhary M."/>
            <person name="Donohue T.J."/>
            <person name="Kaplan S."/>
        </authorList>
    </citation>
    <scope>NUCLEOTIDE SEQUENCE [LARGE SCALE GENOMIC DNA]</scope>
    <source>
        <strain>ATCC 17025 / ATH 2.4.3</strain>
    </source>
</reference>
<feature type="chain" id="PRO_1000063133" description="Imidazole glycerol phosphate synthase subunit HisF">
    <location>
        <begin position="1"/>
        <end position="253"/>
    </location>
</feature>
<feature type="active site" evidence="1">
    <location>
        <position position="11"/>
    </location>
</feature>
<feature type="active site" evidence="1">
    <location>
        <position position="130"/>
    </location>
</feature>
<comment type="function">
    <text evidence="1">IGPS catalyzes the conversion of PRFAR and glutamine to IGP, AICAR and glutamate. The HisF subunit catalyzes the cyclization activity that produces IGP and AICAR from PRFAR using the ammonia provided by the HisH subunit.</text>
</comment>
<comment type="catalytic activity">
    <reaction evidence="1">
        <text>5-[(5-phospho-1-deoxy-D-ribulos-1-ylimino)methylamino]-1-(5-phospho-beta-D-ribosyl)imidazole-4-carboxamide + L-glutamine = D-erythro-1-(imidazol-4-yl)glycerol 3-phosphate + 5-amino-1-(5-phospho-beta-D-ribosyl)imidazole-4-carboxamide + L-glutamate + H(+)</text>
        <dbReference type="Rhea" id="RHEA:24793"/>
        <dbReference type="ChEBI" id="CHEBI:15378"/>
        <dbReference type="ChEBI" id="CHEBI:29985"/>
        <dbReference type="ChEBI" id="CHEBI:58278"/>
        <dbReference type="ChEBI" id="CHEBI:58359"/>
        <dbReference type="ChEBI" id="CHEBI:58475"/>
        <dbReference type="ChEBI" id="CHEBI:58525"/>
        <dbReference type="EC" id="4.3.2.10"/>
    </reaction>
</comment>
<comment type="pathway">
    <text evidence="1">Amino-acid biosynthesis; L-histidine biosynthesis; L-histidine from 5-phospho-alpha-D-ribose 1-diphosphate: step 5/9.</text>
</comment>
<comment type="subunit">
    <text evidence="1">Heterodimer of HisH and HisF.</text>
</comment>
<comment type="subcellular location">
    <subcellularLocation>
        <location evidence="1">Cytoplasm</location>
    </subcellularLocation>
</comment>
<comment type="similarity">
    <text evidence="1">Belongs to the HisA/HisF family.</text>
</comment>
<proteinExistence type="inferred from homology"/>
<name>HIS6_CERS5</name>
<keyword id="KW-0028">Amino-acid biosynthesis</keyword>
<keyword id="KW-0963">Cytoplasm</keyword>
<keyword id="KW-0368">Histidine biosynthesis</keyword>
<keyword id="KW-0456">Lyase</keyword>
<dbReference type="EC" id="4.3.2.10" evidence="1"/>
<dbReference type="EMBL" id="CP000661">
    <property type="protein sequence ID" value="ABP71142.1"/>
    <property type="molecule type" value="Genomic_DNA"/>
</dbReference>
<dbReference type="SMR" id="A4WUS8"/>
<dbReference type="STRING" id="349102.Rsph17025_2252"/>
<dbReference type="KEGG" id="rsq:Rsph17025_2252"/>
<dbReference type="eggNOG" id="COG0107">
    <property type="taxonomic scope" value="Bacteria"/>
</dbReference>
<dbReference type="HOGENOM" id="CLU_048577_4_0_5"/>
<dbReference type="BioCyc" id="RSPH349102:G1G8M-2322-MONOMER"/>
<dbReference type="UniPathway" id="UPA00031">
    <property type="reaction ID" value="UER00010"/>
</dbReference>
<dbReference type="GO" id="GO:0005737">
    <property type="term" value="C:cytoplasm"/>
    <property type="evidence" value="ECO:0007669"/>
    <property type="project" value="UniProtKB-SubCell"/>
</dbReference>
<dbReference type="GO" id="GO:0000107">
    <property type="term" value="F:imidazoleglycerol-phosphate synthase activity"/>
    <property type="evidence" value="ECO:0007669"/>
    <property type="project" value="UniProtKB-UniRule"/>
</dbReference>
<dbReference type="GO" id="GO:0016829">
    <property type="term" value="F:lyase activity"/>
    <property type="evidence" value="ECO:0007669"/>
    <property type="project" value="UniProtKB-KW"/>
</dbReference>
<dbReference type="GO" id="GO:0000105">
    <property type="term" value="P:L-histidine biosynthetic process"/>
    <property type="evidence" value="ECO:0007669"/>
    <property type="project" value="UniProtKB-UniRule"/>
</dbReference>
<dbReference type="CDD" id="cd04731">
    <property type="entry name" value="HisF"/>
    <property type="match status" value="1"/>
</dbReference>
<dbReference type="FunFam" id="3.20.20.70:FF:000006">
    <property type="entry name" value="Imidazole glycerol phosphate synthase subunit HisF"/>
    <property type="match status" value="1"/>
</dbReference>
<dbReference type="Gene3D" id="3.20.20.70">
    <property type="entry name" value="Aldolase class I"/>
    <property type="match status" value="1"/>
</dbReference>
<dbReference type="HAMAP" id="MF_01013">
    <property type="entry name" value="HisF"/>
    <property type="match status" value="1"/>
</dbReference>
<dbReference type="InterPro" id="IPR013785">
    <property type="entry name" value="Aldolase_TIM"/>
</dbReference>
<dbReference type="InterPro" id="IPR006062">
    <property type="entry name" value="His_biosynth"/>
</dbReference>
<dbReference type="InterPro" id="IPR004651">
    <property type="entry name" value="HisF"/>
</dbReference>
<dbReference type="InterPro" id="IPR050064">
    <property type="entry name" value="IGPS_HisA/HisF"/>
</dbReference>
<dbReference type="InterPro" id="IPR011060">
    <property type="entry name" value="RibuloseP-bd_barrel"/>
</dbReference>
<dbReference type="NCBIfam" id="TIGR00735">
    <property type="entry name" value="hisF"/>
    <property type="match status" value="1"/>
</dbReference>
<dbReference type="PANTHER" id="PTHR21235:SF2">
    <property type="entry name" value="IMIDAZOLE GLYCEROL PHOSPHATE SYNTHASE HISHF"/>
    <property type="match status" value="1"/>
</dbReference>
<dbReference type="PANTHER" id="PTHR21235">
    <property type="entry name" value="IMIDAZOLE GLYCEROL PHOSPHATE SYNTHASE SUBUNIT HISF/H IGP SYNTHASE SUBUNIT HISF/H"/>
    <property type="match status" value="1"/>
</dbReference>
<dbReference type="Pfam" id="PF00977">
    <property type="entry name" value="His_biosynth"/>
    <property type="match status" value="1"/>
</dbReference>
<dbReference type="SUPFAM" id="SSF51366">
    <property type="entry name" value="Ribulose-phoshate binding barrel"/>
    <property type="match status" value="1"/>
</dbReference>
<gene>
    <name evidence="1" type="primary">hisF</name>
    <name type="ordered locus">Rsph17025_2252</name>
</gene>